<keyword id="KW-0256">Endoplasmic reticulum</keyword>
<keyword id="KW-0456">Lyase</keyword>
<keyword id="KW-0472">Membrane</keyword>
<keyword id="KW-0521">NADP</keyword>
<keyword id="KW-1185">Reference proteome</keyword>
<keyword id="KW-0812">Transmembrane</keyword>
<keyword id="KW-1133">Transmembrane helix</keyword>
<proteinExistence type="evidence at transcript level"/>
<accession>Q69L93</accession>
<accession>B9FV34</accession>
<protein>
    <recommendedName>
        <fullName evidence="5">Very-long-chain aldehyde decarbonylase GL1-8</fullName>
        <ecNumber evidence="1">4.1.99.5</ecNumber>
    </recommendedName>
    <alternativeName>
        <fullName evidence="4">Protein GLOSSY 1-8</fullName>
    </alternativeName>
</protein>
<comment type="function">
    <text evidence="1">Aldehyde decarbonylase involved in the conversion of aldehydes to alkanes. Core component of a very-long-chain alkane synthesis complex.</text>
</comment>
<comment type="catalytic activity">
    <reaction evidence="1">
        <text>a long-chain fatty aldehyde + 2 NADPH + O2 + H(+) = a long-chain alkane + formate + 2 NADP(+) + H2O</text>
        <dbReference type="Rhea" id="RHEA:21440"/>
        <dbReference type="ChEBI" id="CHEBI:15377"/>
        <dbReference type="ChEBI" id="CHEBI:15378"/>
        <dbReference type="ChEBI" id="CHEBI:15379"/>
        <dbReference type="ChEBI" id="CHEBI:15740"/>
        <dbReference type="ChEBI" id="CHEBI:17176"/>
        <dbReference type="ChEBI" id="CHEBI:57783"/>
        <dbReference type="ChEBI" id="CHEBI:58349"/>
        <dbReference type="ChEBI" id="CHEBI:83563"/>
        <dbReference type="EC" id="4.1.99.5"/>
    </reaction>
</comment>
<comment type="subunit">
    <text evidence="1">Homodimer.</text>
</comment>
<comment type="subcellular location">
    <subcellularLocation>
        <location evidence="1">Endoplasmic reticulum membrane</location>
        <topology evidence="1">Multi-pass membrane protein</topology>
    </subcellularLocation>
</comment>
<comment type="tissue specificity">
    <text evidence="3">Expressed ubiquitously.</text>
</comment>
<comment type="similarity">
    <text evidence="5">Belongs to the sterol desaturase family.</text>
</comment>
<comment type="sequence caution" evidence="5">
    <conflict type="erroneous initiation">
        <sequence resource="EMBL-CDS" id="EEE66421"/>
    </conflict>
    <text>Truncated N-terminus.</text>
</comment>
<feature type="chain" id="PRO_0000445880" description="Very-long-chain aldehyde decarbonylase GL1-8">
    <location>
        <begin position="1"/>
        <end position="268"/>
    </location>
</feature>
<feature type="transmembrane region" description="Helical" evidence="2">
    <location>
        <begin position="26"/>
        <end position="46"/>
    </location>
</feature>
<feature type="transmembrane region" description="Helical" evidence="2">
    <location>
        <begin position="70"/>
        <end position="90"/>
    </location>
</feature>
<feature type="transmembrane region" description="Helical" evidence="2">
    <location>
        <begin position="107"/>
        <end position="127"/>
    </location>
</feature>
<feature type="transmembrane region" description="Helical" evidence="2">
    <location>
        <begin position="164"/>
        <end position="184"/>
    </location>
</feature>
<feature type="domain" description="Fatty acid hydroxylase" evidence="2">
    <location>
        <begin position="114"/>
        <end position="249"/>
    </location>
</feature>
<feature type="sequence conflict" description="In Ref. 5; AK071749." evidence="5" ref="5">
    <original>S</original>
    <variation>P</variation>
    <location>
        <position position="233"/>
    </location>
</feature>
<gene>
    <name evidence="4" type="primary">GL1-8</name>
    <name evidence="5" type="ordered locus">LOC_Os07g01150</name>
    <name evidence="7" type="ordered locus">Os07g0101500</name>
    <name evidence="6" type="ORF">B1026C12.22</name>
    <name evidence="8" type="ORF">OSNPB_070101500</name>
</gene>
<evidence type="ECO:0000250" key="1">
    <source>
        <dbReference type="UniProtKB" id="F4HVY0"/>
    </source>
</evidence>
<evidence type="ECO:0000255" key="2"/>
<evidence type="ECO:0000269" key="3">
    <source>
    </source>
</evidence>
<evidence type="ECO:0000303" key="4">
    <source>
    </source>
</evidence>
<evidence type="ECO:0000305" key="5"/>
<evidence type="ECO:0000312" key="6">
    <source>
        <dbReference type="EMBL" id="BAD31829.1"/>
    </source>
</evidence>
<evidence type="ECO:0000312" key="7">
    <source>
        <dbReference type="EMBL" id="BAF20592.1"/>
    </source>
</evidence>
<evidence type="ECO:0000312" key="8">
    <source>
        <dbReference type="EMBL" id="BAS99681.1"/>
    </source>
</evidence>
<organism>
    <name type="scientific">Oryza sativa subsp. japonica</name>
    <name type="common">Rice</name>
    <dbReference type="NCBI Taxonomy" id="39947"/>
    <lineage>
        <taxon>Eukaryota</taxon>
        <taxon>Viridiplantae</taxon>
        <taxon>Streptophyta</taxon>
        <taxon>Embryophyta</taxon>
        <taxon>Tracheophyta</taxon>
        <taxon>Spermatophyta</taxon>
        <taxon>Magnoliopsida</taxon>
        <taxon>Liliopsida</taxon>
        <taxon>Poales</taxon>
        <taxon>Poaceae</taxon>
        <taxon>BOP clade</taxon>
        <taxon>Oryzoideae</taxon>
        <taxon>Oryzeae</taxon>
        <taxon>Oryzinae</taxon>
        <taxon>Oryza</taxon>
        <taxon>Oryza sativa</taxon>
    </lineage>
</organism>
<dbReference type="EC" id="4.1.99.5" evidence="1"/>
<dbReference type="EMBL" id="AP005869">
    <property type="protein sequence ID" value="BAD31829.1"/>
    <property type="molecule type" value="Genomic_DNA"/>
</dbReference>
<dbReference type="EMBL" id="AP008213">
    <property type="protein sequence ID" value="BAF20592.1"/>
    <property type="molecule type" value="Genomic_DNA"/>
</dbReference>
<dbReference type="EMBL" id="AP014963">
    <property type="protein sequence ID" value="BAS99681.1"/>
    <property type="molecule type" value="Genomic_DNA"/>
</dbReference>
<dbReference type="EMBL" id="CM000144">
    <property type="protein sequence ID" value="EEE66421.1"/>
    <property type="status" value="ALT_INIT"/>
    <property type="molecule type" value="Genomic_DNA"/>
</dbReference>
<dbReference type="EMBL" id="AK071749">
    <property type="status" value="NOT_ANNOTATED_CDS"/>
    <property type="molecule type" value="Genomic_DNA"/>
</dbReference>
<dbReference type="SMR" id="Q69L93"/>
<dbReference type="FunCoup" id="Q69L93">
    <property type="interactions" value="1004"/>
</dbReference>
<dbReference type="STRING" id="39947.Q69L93"/>
<dbReference type="PaxDb" id="39947-Q69L93"/>
<dbReference type="EnsemblPlants" id="Os07t0101500-01">
    <property type="protein sequence ID" value="Os07t0101500-01"/>
    <property type="gene ID" value="Os07g0101500"/>
</dbReference>
<dbReference type="Gramene" id="Os07t0101500-01">
    <property type="protein sequence ID" value="Os07t0101500-01"/>
    <property type="gene ID" value="Os07g0101500"/>
</dbReference>
<dbReference type="KEGG" id="dosa:Os07g0101500"/>
<dbReference type="KEGG" id="osa:4342171"/>
<dbReference type="eggNOG" id="KOG0873">
    <property type="taxonomic scope" value="Eukaryota"/>
</dbReference>
<dbReference type="HOGENOM" id="CLU_047036_5_3_1"/>
<dbReference type="InParanoid" id="Q69L93"/>
<dbReference type="OMA" id="EIMFYYA"/>
<dbReference type="OrthoDB" id="1658724at2759"/>
<dbReference type="PlantReactome" id="R-OSA-1119286">
    <property type="pathway name" value="Cholesterol biosynthesis II (via 24,25-dihydrolanosterol)"/>
</dbReference>
<dbReference type="PlantReactome" id="R-OSA-1119439">
    <property type="pathway name" value="Cholesterol biosynthesis III (via desmosterol)"/>
</dbReference>
<dbReference type="PlantReactome" id="R-OSA-1119559">
    <property type="pathway name" value="Cholesterol biosynthesis I"/>
</dbReference>
<dbReference type="Proteomes" id="UP000000763">
    <property type="component" value="Chromosome 7"/>
</dbReference>
<dbReference type="Proteomes" id="UP000007752">
    <property type="component" value="Chromosome 7"/>
</dbReference>
<dbReference type="Proteomes" id="UP000059680">
    <property type="component" value="Chromosome 7"/>
</dbReference>
<dbReference type="GO" id="GO:0005789">
    <property type="term" value="C:endoplasmic reticulum membrane"/>
    <property type="evidence" value="ECO:0000318"/>
    <property type="project" value="GO_Central"/>
</dbReference>
<dbReference type="GO" id="GO:0071771">
    <property type="term" value="F:aldehyde oxygenase (deformylating) activity"/>
    <property type="evidence" value="ECO:0007669"/>
    <property type="project" value="UniProtKB-EC"/>
</dbReference>
<dbReference type="GO" id="GO:0000254">
    <property type="term" value="F:C-4 methylsterol oxidase activity"/>
    <property type="evidence" value="ECO:0000318"/>
    <property type="project" value="GO_Central"/>
</dbReference>
<dbReference type="GO" id="GO:0005506">
    <property type="term" value="F:iron ion binding"/>
    <property type="evidence" value="ECO:0007669"/>
    <property type="project" value="InterPro"/>
</dbReference>
<dbReference type="GO" id="GO:0080065">
    <property type="term" value="P:4-alpha-methyl-delta7-sterol oxidation"/>
    <property type="evidence" value="ECO:0000318"/>
    <property type="project" value="GO_Central"/>
</dbReference>
<dbReference type="GO" id="GO:0016126">
    <property type="term" value="P:sterol biosynthetic process"/>
    <property type="evidence" value="ECO:0000318"/>
    <property type="project" value="GO_Central"/>
</dbReference>
<dbReference type="InterPro" id="IPR006694">
    <property type="entry name" value="Fatty_acid_hydroxylase"/>
</dbReference>
<dbReference type="InterPro" id="IPR050307">
    <property type="entry name" value="Sterol_Desaturase_Related"/>
</dbReference>
<dbReference type="PANTHER" id="PTHR11863">
    <property type="entry name" value="STEROL DESATURASE"/>
    <property type="match status" value="1"/>
</dbReference>
<dbReference type="Pfam" id="PF04116">
    <property type="entry name" value="FA_hydroxylase"/>
    <property type="match status" value="1"/>
</dbReference>
<reference key="1">
    <citation type="journal article" date="2005" name="Nature">
        <title>The map-based sequence of the rice genome.</title>
        <authorList>
            <consortium name="International rice genome sequencing project (IRGSP)"/>
        </authorList>
    </citation>
    <scope>NUCLEOTIDE SEQUENCE [LARGE SCALE GENOMIC DNA]</scope>
    <source>
        <strain>cv. Nipponbare</strain>
    </source>
</reference>
<reference key="2">
    <citation type="journal article" date="2008" name="Nucleic Acids Res.">
        <title>The rice annotation project database (RAP-DB): 2008 update.</title>
        <authorList>
            <consortium name="The rice annotation project (RAP)"/>
        </authorList>
    </citation>
    <scope>GENOME REANNOTATION</scope>
    <source>
        <strain>cv. Nipponbare</strain>
    </source>
</reference>
<reference key="3">
    <citation type="journal article" date="2013" name="Rice">
        <title>Improvement of the Oryza sativa Nipponbare reference genome using next generation sequence and optical map data.</title>
        <authorList>
            <person name="Kawahara Y."/>
            <person name="de la Bastide M."/>
            <person name="Hamilton J.P."/>
            <person name="Kanamori H."/>
            <person name="McCombie W.R."/>
            <person name="Ouyang S."/>
            <person name="Schwartz D.C."/>
            <person name="Tanaka T."/>
            <person name="Wu J."/>
            <person name="Zhou S."/>
            <person name="Childs K.L."/>
            <person name="Davidson R.M."/>
            <person name="Lin H."/>
            <person name="Quesada-Ocampo L."/>
            <person name="Vaillancourt B."/>
            <person name="Sakai H."/>
            <person name="Lee S.S."/>
            <person name="Kim J."/>
            <person name="Numa H."/>
            <person name="Itoh T."/>
            <person name="Buell C.R."/>
            <person name="Matsumoto T."/>
        </authorList>
    </citation>
    <scope>GENOME REANNOTATION</scope>
    <source>
        <strain>cv. Nipponbare</strain>
    </source>
</reference>
<reference key="4">
    <citation type="journal article" date="2005" name="PLoS Biol.">
        <title>The genomes of Oryza sativa: a history of duplications.</title>
        <authorList>
            <person name="Yu J."/>
            <person name="Wang J."/>
            <person name="Lin W."/>
            <person name="Li S."/>
            <person name="Li H."/>
            <person name="Zhou J."/>
            <person name="Ni P."/>
            <person name="Dong W."/>
            <person name="Hu S."/>
            <person name="Zeng C."/>
            <person name="Zhang J."/>
            <person name="Zhang Y."/>
            <person name="Li R."/>
            <person name="Xu Z."/>
            <person name="Li S."/>
            <person name="Li X."/>
            <person name="Zheng H."/>
            <person name="Cong L."/>
            <person name="Lin L."/>
            <person name="Yin J."/>
            <person name="Geng J."/>
            <person name="Li G."/>
            <person name="Shi J."/>
            <person name="Liu J."/>
            <person name="Lv H."/>
            <person name="Li J."/>
            <person name="Wang J."/>
            <person name="Deng Y."/>
            <person name="Ran L."/>
            <person name="Shi X."/>
            <person name="Wang X."/>
            <person name="Wu Q."/>
            <person name="Li C."/>
            <person name="Ren X."/>
            <person name="Wang J."/>
            <person name="Wang X."/>
            <person name="Li D."/>
            <person name="Liu D."/>
            <person name="Zhang X."/>
            <person name="Ji Z."/>
            <person name="Zhao W."/>
            <person name="Sun Y."/>
            <person name="Zhang Z."/>
            <person name="Bao J."/>
            <person name="Han Y."/>
            <person name="Dong L."/>
            <person name="Ji J."/>
            <person name="Chen P."/>
            <person name="Wu S."/>
            <person name="Liu J."/>
            <person name="Xiao Y."/>
            <person name="Bu D."/>
            <person name="Tan J."/>
            <person name="Yang L."/>
            <person name="Ye C."/>
            <person name="Zhang J."/>
            <person name="Xu J."/>
            <person name="Zhou Y."/>
            <person name="Yu Y."/>
            <person name="Zhang B."/>
            <person name="Zhuang S."/>
            <person name="Wei H."/>
            <person name="Liu B."/>
            <person name="Lei M."/>
            <person name="Yu H."/>
            <person name="Li Y."/>
            <person name="Xu H."/>
            <person name="Wei S."/>
            <person name="He X."/>
            <person name="Fang L."/>
            <person name="Zhang Z."/>
            <person name="Zhang Y."/>
            <person name="Huang X."/>
            <person name="Su Z."/>
            <person name="Tong W."/>
            <person name="Li J."/>
            <person name="Tong Z."/>
            <person name="Li S."/>
            <person name="Ye J."/>
            <person name="Wang L."/>
            <person name="Fang L."/>
            <person name="Lei T."/>
            <person name="Chen C.-S."/>
            <person name="Chen H.-C."/>
            <person name="Xu Z."/>
            <person name="Li H."/>
            <person name="Huang H."/>
            <person name="Zhang F."/>
            <person name="Xu H."/>
            <person name="Li N."/>
            <person name="Zhao C."/>
            <person name="Li S."/>
            <person name="Dong L."/>
            <person name="Huang Y."/>
            <person name="Li L."/>
            <person name="Xi Y."/>
            <person name="Qi Q."/>
            <person name="Li W."/>
            <person name="Zhang B."/>
            <person name="Hu W."/>
            <person name="Zhang Y."/>
            <person name="Tian X."/>
            <person name="Jiao Y."/>
            <person name="Liang X."/>
            <person name="Jin J."/>
            <person name="Gao L."/>
            <person name="Zheng W."/>
            <person name="Hao B."/>
            <person name="Liu S.-M."/>
            <person name="Wang W."/>
            <person name="Yuan L."/>
            <person name="Cao M."/>
            <person name="McDermott J."/>
            <person name="Samudrala R."/>
            <person name="Wang J."/>
            <person name="Wong G.K.-S."/>
            <person name="Yang H."/>
        </authorList>
    </citation>
    <scope>NUCLEOTIDE SEQUENCE [LARGE SCALE GENOMIC DNA]</scope>
    <source>
        <strain>cv. Nipponbare</strain>
    </source>
</reference>
<reference key="5">
    <citation type="journal article" date="2003" name="Science">
        <title>Collection, mapping, and annotation of over 28,000 cDNA clones from japonica rice.</title>
        <authorList>
            <consortium name="The rice full-length cDNA consortium"/>
        </authorList>
    </citation>
    <scope>NUCLEOTIDE SEQUENCE [LARGE SCALE MRNA]</scope>
    <source>
        <strain>cv. Nipponbare</strain>
    </source>
</reference>
<reference key="6">
    <citation type="journal article" date="2009" name="Plant Mol. Biol.">
        <title>Characterization of Glossy1-homologous genes in rice involved in leaf wax accumulation and drought resistance.</title>
        <authorList>
            <person name="Islam M.A."/>
            <person name="Du H."/>
            <person name="Ning J."/>
            <person name="Ye H."/>
            <person name="Xiong L."/>
        </authorList>
    </citation>
    <scope>TISSUE SPECIFICITY</scope>
    <scope>GENE FAMILY</scope>
    <scope>NOMENCLATURE</scope>
</reference>
<sequence>MMAAAGLESAWEYLITHFSEFQLASIGTFLLHESVFFLSGLPSLLFERLGLFSKYKIQKKSNTPDYQNRCVVRLVLYHVCVNLPLTILSYRTFKFMGLRSTLPLPHWTVVVSQVLFFFVLEDFIFYWGHRALHTKWLYQHVHSVHHEYATPFGLTSEYAHPAEILFLGFATVAGPALTGPHLFTLWVWMVLRVLETVEAHSGYHFPWSPSNFLPLYGGAEFHDYHHRVLYTKSGNYSSTFIYMDWLFGTDKDYRKTKALEEKERTKHL</sequence>
<name>GLO18_ORYSJ</name>